<gene>
    <name evidence="1" type="primary">panB</name>
    <name type="ordered locus">CPS_4312</name>
</gene>
<name>PANB_COLP3</name>
<proteinExistence type="inferred from homology"/>
<accession>Q47W60</accession>
<sequence length="264" mass="28117">MAKITTASLLNMKQQGKKISTITAYDASFAKLFDQAGIHAILIGDSLGMVLQGQDSTLPVTIEDMAYHTRCVKRGVEETLIIADMPFMSYANEEQALANAALLMQAGASMVKIEGGAWLNGTISALVERGVPVCAHLGLTPQSVNIFGGFKVQGRDDDKAQQMIADAKALEAAGAQLLVLECIPAILGEAITQALTIPTIGIGAGKDTDGQILVMHDALGIACNYMPKFSRNFLKDTGDIKKAVELYISEVSEGNFPGDEHIFK</sequence>
<protein>
    <recommendedName>
        <fullName evidence="1">3-methyl-2-oxobutanoate hydroxymethyltransferase</fullName>
        <ecNumber evidence="1">2.1.2.11</ecNumber>
    </recommendedName>
    <alternativeName>
        <fullName evidence="1">Ketopantoate hydroxymethyltransferase</fullName>
        <shortName evidence="1">KPHMT</shortName>
    </alternativeName>
</protein>
<comment type="function">
    <text evidence="1">Catalyzes the reversible reaction in which hydroxymethyl group from 5,10-methylenetetrahydrofolate is transferred onto alpha-ketoisovalerate to form ketopantoate.</text>
</comment>
<comment type="catalytic activity">
    <reaction evidence="1">
        <text>3-methyl-2-oxobutanoate + (6R)-5,10-methylene-5,6,7,8-tetrahydrofolate + H2O = 2-dehydropantoate + (6S)-5,6,7,8-tetrahydrofolate</text>
        <dbReference type="Rhea" id="RHEA:11824"/>
        <dbReference type="ChEBI" id="CHEBI:11561"/>
        <dbReference type="ChEBI" id="CHEBI:11851"/>
        <dbReference type="ChEBI" id="CHEBI:15377"/>
        <dbReference type="ChEBI" id="CHEBI:15636"/>
        <dbReference type="ChEBI" id="CHEBI:57453"/>
        <dbReference type="EC" id="2.1.2.11"/>
    </reaction>
</comment>
<comment type="cofactor">
    <cofactor evidence="1">
        <name>Mg(2+)</name>
        <dbReference type="ChEBI" id="CHEBI:18420"/>
    </cofactor>
    <text evidence="1">Binds 1 Mg(2+) ion per subunit.</text>
</comment>
<comment type="pathway">
    <text evidence="1">Cofactor biosynthesis; (R)-pantothenate biosynthesis; (R)-pantoate from 3-methyl-2-oxobutanoate: step 1/2.</text>
</comment>
<comment type="subunit">
    <text evidence="1">Homodecamer; pentamer of dimers.</text>
</comment>
<comment type="subcellular location">
    <subcellularLocation>
        <location evidence="1">Cytoplasm</location>
    </subcellularLocation>
</comment>
<comment type="similarity">
    <text evidence="1">Belongs to the PanB family.</text>
</comment>
<evidence type="ECO:0000255" key="1">
    <source>
        <dbReference type="HAMAP-Rule" id="MF_00156"/>
    </source>
</evidence>
<keyword id="KW-0963">Cytoplasm</keyword>
<keyword id="KW-0460">Magnesium</keyword>
<keyword id="KW-0479">Metal-binding</keyword>
<keyword id="KW-0566">Pantothenate biosynthesis</keyword>
<keyword id="KW-0808">Transferase</keyword>
<feature type="chain" id="PRO_0000297249" description="3-methyl-2-oxobutanoate hydroxymethyltransferase">
    <location>
        <begin position="1"/>
        <end position="264"/>
    </location>
</feature>
<feature type="active site" description="Proton acceptor" evidence="1">
    <location>
        <position position="181"/>
    </location>
</feature>
<feature type="binding site" evidence="1">
    <location>
        <begin position="45"/>
        <end position="46"/>
    </location>
    <ligand>
        <name>3-methyl-2-oxobutanoate</name>
        <dbReference type="ChEBI" id="CHEBI:11851"/>
    </ligand>
</feature>
<feature type="binding site" evidence="1">
    <location>
        <position position="45"/>
    </location>
    <ligand>
        <name>Mg(2+)</name>
        <dbReference type="ChEBI" id="CHEBI:18420"/>
    </ligand>
</feature>
<feature type="binding site" evidence="1">
    <location>
        <position position="84"/>
    </location>
    <ligand>
        <name>3-methyl-2-oxobutanoate</name>
        <dbReference type="ChEBI" id="CHEBI:11851"/>
    </ligand>
</feature>
<feature type="binding site" evidence="1">
    <location>
        <position position="84"/>
    </location>
    <ligand>
        <name>Mg(2+)</name>
        <dbReference type="ChEBI" id="CHEBI:18420"/>
    </ligand>
</feature>
<feature type="binding site" evidence="1">
    <location>
        <position position="112"/>
    </location>
    <ligand>
        <name>3-methyl-2-oxobutanoate</name>
        <dbReference type="ChEBI" id="CHEBI:11851"/>
    </ligand>
</feature>
<feature type="binding site" evidence="1">
    <location>
        <position position="114"/>
    </location>
    <ligand>
        <name>Mg(2+)</name>
        <dbReference type="ChEBI" id="CHEBI:18420"/>
    </ligand>
</feature>
<dbReference type="EC" id="2.1.2.11" evidence="1"/>
<dbReference type="EMBL" id="CP000083">
    <property type="protein sequence ID" value="AAZ24014.1"/>
    <property type="molecule type" value="Genomic_DNA"/>
</dbReference>
<dbReference type="RefSeq" id="WP_011045043.1">
    <property type="nucleotide sequence ID" value="NC_003910.7"/>
</dbReference>
<dbReference type="SMR" id="Q47W60"/>
<dbReference type="STRING" id="167879.CPS_4312"/>
<dbReference type="KEGG" id="cps:CPS_4312"/>
<dbReference type="eggNOG" id="COG0413">
    <property type="taxonomic scope" value="Bacteria"/>
</dbReference>
<dbReference type="HOGENOM" id="CLU_036645_1_0_6"/>
<dbReference type="UniPathway" id="UPA00028">
    <property type="reaction ID" value="UER00003"/>
</dbReference>
<dbReference type="Proteomes" id="UP000000547">
    <property type="component" value="Chromosome"/>
</dbReference>
<dbReference type="GO" id="GO:0005737">
    <property type="term" value="C:cytoplasm"/>
    <property type="evidence" value="ECO:0007669"/>
    <property type="project" value="UniProtKB-SubCell"/>
</dbReference>
<dbReference type="GO" id="GO:0003864">
    <property type="term" value="F:3-methyl-2-oxobutanoate hydroxymethyltransferase activity"/>
    <property type="evidence" value="ECO:0007669"/>
    <property type="project" value="UniProtKB-UniRule"/>
</dbReference>
<dbReference type="GO" id="GO:0000287">
    <property type="term" value="F:magnesium ion binding"/>
    <property type="evidence" value="ECO:0007669"/>
    <property type="project" value="TreeGrafter"/>
</dbReference>
<dbReference type="GO" id="GO:0015940">
    <property type="term" value="P:pantothenate biosynthetic process"/>
    <property type="evidence" value="ECO:0007669"/>
    <property type="project" value="UniProtKB-UniRule"/>
</dbReference>
<dbReference type="CDD" id="cd06557">
    <property type="entry name" value="KPHMT-like"/>
    <property type="match status" value="1"/>
</dbReference>
<dbReference type="FunFam" id="3.20.20.60:FF:000003">
    <property type="entry name" value="3-methyl-2-oxobutanoate hydroxymethyltransferase"/>
    <property type="match status" value="1"/>
</dbReference>
<dbReference type="Gene3D" id="3.20.20.60">
    <property type="entry name" value="Phosphoenolpyruvate-binding domains"/>
    <property type="match status" value="1"/>
</dbReference>
<dbReference type="HAMAP" id="MF_00156">
    <property type="entry name" value="PanB"/>
    <property type="match status" value="1"/>
</dbReference>
<dbReference type="InterPro" id="IPR003700">
    <property type="entry name" value="Pantoate_hydroxy_MeTrfase"/>
</dbReference>
<dbReference type="InterPro" id="IPR015813">
    <property type="entry name" value="Pyrv/PenolPyrv_kinase-like_dom"/>
</dbReference>
<dbReference type="InterPro" id="IPR040442">
    <property type="entry name" value="Pyrv_kinase-like_dom_sf"/>
</dbReference>
<dbReference type="NCBIfam" id="TIGR00222">
    <property type="entry name" value="panB"/>
    <property type="match status" value="1"/>
</dbReference>
<dbReference type="NCBIfam" id="NF001452">
    <property type="entry name" value="PRK00311.1"/>
    <property type="match status" value="1"/>
</dbReference>
<dbReference type="PANTHER" id="PTHR20881">
    <property type="entry name" value="3-METHYL-2-OXOBUTANOATE HYDROXYMETHYLTRANSFERASE"/>
    <property type="match status" value="1"/>
</dbReference>
<dbReference type="PANTHER" id="PTHR20881:SF0">
    <property type="entry name" value="3-METHYL-2-OXOBUTANOATE HYDROXYMETHYLTRANSFERASE"/>
    <property type="match status" value="1"/>
</dbReference>
<dbReference type="Pfam" id="PF02548">
    <property type="entry name" value="Pantoate_transf"/>
    <property type="match status" value="1"/>
</dbReference>
<dbReference type="PIRSF" id="PIRSF000388">
    <property type="entry name" value="Pantoate_hydroxy_MeTrfase"/>
    <property type="match status" value="1"/>
</dbReference>
<dbReference type="SUPFAM" id="SSF51621">
    <property type="entry name" value="Phosphoenolpyruvate/pyruvate domain"/>
    <property type="match status" value="1"/>
</dbReference>
<reference key="1">
    <citation type="journal article" date="2005" name="Proc. Natl. Acad. Sci. U.S.A.">
        <title>The psychrophilic lifestyle as revealed by the genome sequence of Colwellia psychrerythraea 34H through genomic and proteomic analyses.</title>
        <authorList>
            <person name="Methe B.A."/>
            <person name="Nelson K.E."/>
            <person name="Deming J.W."/>
            <person name="Momen B."/>
            <person name="Melamud E."/>
            <person name="Zhang X."/>
            <person name="Moult J."/>
            <person name="Madupu R."/>
            <person name="Nelson W.C."/>
            <person name="Dodson R.J."/>
            <person name="Brinkac L.M."/>
            <person name="Daugherty S.C."/>
            <person name="Durkin A.S."/>
            <person name="DeBoy R.T."/>
            <person name="Kolonay J.F."/>
            <person name="Sullivan S.A."/>
            <person name="Zhou L."/>
            <person name="Davidsen T.M."/>
            <person name="Wu M."/>
            <person name="Huston A.L."/>
            <person name="Lewis M."/>
            <person name="Weaver B."/>
            <person name="Weidman J.F."/>
            <person name="Khouri H."/>
            <person name="Utterback T.R."/>
            <person name="Feldblyum T.V."/>
            <person name="Fraser C.M."/>
        </authorList>
    </citation>
    <scope>NUCLEOTIDE SEQUENCE [LARGE SCALE GENOMIC DNA]</scope>
    <source>
        <strain>34H / ATCC BAA-681</strain>
    </source>
</reference>
<organism>
    <name type="scientific">Colwellia psychrerythraea (strain 34H / ATCC BAA-681)</name>
    <name type="common">Vibrio psychroerythus</name>
    <dbReference type="NCBI Taxonomy" id="167879"/>
    <lineage>
        <taxon>Bacteria</taxon>
        <taxon>Pseudomonadati</taxon>
        <taxon>Pseudomonadota</taxon>
        <taxon>Gammaproteobacteria</taxon>
        <taxon>Alteromonadales</taxon>
        <taxon>Colwelliaceae</taxon>
        <taxon>Colwellia</taxon>
    </lineage>
</organism>